<protein>
    <recommendedName>
        <fullName evidence="1">Cysteine--tRNA ligase</fullName>
        <ecNumber evidence="1">6.1.1.16</ecNumber>
    </recommendedName>
    <alternativeName>
        <fullName evidence="1">Cysteinyl-tRNA synthetase</fullName>
        <shortName evidence="1">CysRS</shortName>
    </alternativeName>
</protein>
<reference key="1">
    <citation type="journal article" date="2001" name="J. Bacteriol.">
        <title>Genome of the bacterium Streptococcus pneumoniae strain R6.</title>
        <authorList>
            <person name="Hoskins J."/>
            <person name="Alborn W.E. Jr."/>
            <person name="Arnold J."/>
            <person name="Blaszczak L.C."/>
            <person name="Burgett S."/>
            <person name="DeHoff B.S."/>
            <person name="Estrem S.T."/>
            <person name="Fritz L."/>
            <person name="Fu D.-J."/>
            <person name="Fuller W."/>
            <person name="Geringer C."/>
            <person name="Gilmour R."/>
            <person name="Glass J.S."/>
            <person name="Khoja H."/>
            <person name="Kraft A.R."/>
            <person name="Lagace R.E."/>
            <person name="LeBlanc D.J."/>
            <person name="Lee L.N."/>
            <person name="Lefkowitz E.J."/>
            <person name="Lu J."/>
            <person name="Matsushima P."/>
            <person name="McAhren S.M."/>
            <person name="McHenney M."/>
            <person name="McLeaster K."/>
            <person name="Mundy C.W."/>
            <person name="Nicas T.I."/>
            <person name="Norris F.H."/>
            <person name="O'Gara M."/>
            <person name="Peery R.B."/>
            <person name="Robertson G.T."/>
            <person name="Rockey P."/>
            <person name="Sun P.-M."/>
            <person name="Winkler M.E."/>
            <person name="Yang Y."/>
            <person name="Young-Bellido M."/>
            <person name="Zhao G."/>
            <person name="Zook C.A."/>
            <person name="Baltz R.H."/>
            <person name="Jaskunas S.R."/>
            <person name="Rosteck P.R. Jr."/>
            <person name="Skatrud P.L."/>
            <person name="Glass J.I."/>
        </authorList>
    </citation>
    <scope>NUCLEOTIDE SEQUENCE [LARGE SCALE GENOMIC DNA]</scope>
    <source>
        <strain>ATCC BAA-255 / R6</strain>
    </source>
</reference>
<feature type="chain" id="PRO_0000159494" description="Cysteine--tRNA ligase">
    <location>
        <begin position="1"/>
        <end position="447"/>
    </location>
</feature>
<feature type="short sequence motif" description="'HIGH' region">
    <location>
        <begin position="30"/>
        <end position="40"/>
    </location>
</feature>
<feature type="short sequence motif" description="'KMSKS' region">
    <location>
        <begin position="268"/>
        <end position="272"/>
    </location>
</feature>
<feature type="binding site" evidence="1">
    <location>
        <position position="28"/>
    </location>
    <ligand>
        <name>Zn(2+)</name>
        <dbReference type="ChEBI" id="CHEBI:29105"/>
    </ligand>
</feature>
<feature type="binding site" evidence="1">
    <location>
        <position position="211"/>
    </location>
    <ligand>
        <name>Zn(2+)</name>
        <dbReference type="ChEBI" id="CHEBI:29105"/>
    </ligand>
</feature>
<feature type="binding site" evidence="1">
    <location>
        <position position="236"/>
    </location>
    <ligand>
        <name>Zn(2+)</name>
        <dbReference type="ChEBI" id="CHEBI:29105"/>
    </ligand>
</feature>
<feature type="binding site" evidence="1">
    <location>
        <position position="240"/>
    </location>
    <ligand>
        <name>Zn(2+)</name>
        <dbReference type="ChEBI" id="CHEBI:29105"/>
    </ligand>
</feature>
<feature type="binding site" evidence="1">
    <location>
        <position position="271"/>
    </location>
    <ligand>
        <name>ATP</name>
        <dbReference type="ChEBI" id="CHEBI:30616"/>
    </ligand>
</feature>
<dbReference type="EC" id="6.1.1.16" evidence="1"/>
<dbReference type="EMBL" id="AE007317">
    <property type="protein sequence ID" value="AAK99323.1"/>
    <property type="molecule type" value="Genomic_DNA"/>
</dbReference>
<dbReference type="PIR" id="G97936">
    <property type="entry name" value="G97936"/>
</dbReference>
<dbReference type="RefSeq" id="NP_358113.1">
    <property type="nucleotide sequence ID" value="NC_003098.1"/>
</dbReference>
<dbReference type="RefSeq" id="WP_000591098.1">
    <property type="nucleotide sequence ID" value="NC_003098.1"/>
</dbReference>
<dbReference type="SMR" id="Q8DQS8"/>
<dbReference type="STRING" id="171101.spr0519"/>
<dbReference type="KEGG" id="spr:spr0519"/>
<dbReference type="PATRIC" id="fig|171101.6.peg.571"/>
<dbReference type="eggNOG" id="COG0215">
    <property type="taxonomic scope" value="Bacteria"/>
</dbReference>
<dbReference type="HOGENOM" id="CLU_013528_0_1_9"/>
<dbReference type="Proteomes" id="UP000000586">
    <property type="component" value="Chromosome"/>
</dbReference>
<dbReference type="GO" id="GO:0005737">
    <property type="term" value="C:cytoplasm"/>
    <property type="evidence" value="ECO:0000318"/>
    <property type="project" value="GO_Central"/>
</dbReference>
<dbReference type="GO" id="GO:0005829">
    <property type="term" value="C:cytosol"/>
    <property type="evidence" value="ECO:0000318"/>
    <property type="project" value="GO_Central"/>
</dbReference>
<dbReference type="GO" id="GO:0005524">
    <property type="term" value="F:ATP binding"/>
    <property type="evidence" value="ECO:0000318"/>
    <property type="project" value="GO_Central"/>
</dbReference>
<dbReference type="GO" id="GO:0004817">
    <property type="term" value="F:cysteine-tRNA ligase activity"/>
    <property type="evidence" value="ECO:0000318"/>
    <property type="project" value="GO_Central"/>
</dbReference>
<dbReference type="GO" id="GO:0008270">
    <property type="term" value="F:zinc ion binding"/>
    <property type="evidence" value="ECO:0007669"/>
    <property type="project" value="UniProtKB-UniRule"/>
</dbReference>
<dbReference type="GO" id="GO:0006423">
    <property type="term" value="P:cysteinyl-tRNA aminoacylation"/>
    <property type="evidence" value="ECO:0000318"/>
    <property type="project" value="GO_Central"/>
</dbReference>
<dbReference type="CDD" id="cd00672">
    <property type="entry name" value="CysRS_core"/>
    <property type="match status" value="1"/>
</dbReference>
<dbReference type="FunFam" id="1.20.120.640:FF:000002">
    <property type="entry name" value="Cysteine--tRNA ligase"/>
    <property type="match status" value="1"/>
</dbReference>
<dbReference type="FunFam" id="3.40.50.620:FF:000130">
    <property type="entry name" value="Cysteine--tRNA ligase"/>
    <property type="match status" value="1"/>
</dbReference>
<dbReference type="Gene3D" id="1.20.120.640">
    <property type="entry name" value="Anticodon-binding domain of a subclass of class I aminoacyl-tRNA synthetases"/>
    <property type="match status" value="1"/>
</dbReference>
<dbReference type="Gene3D" id="3.40.50.620">
    <property type="entry name" value="HUPs"/>
    <property type="match status" value="1"/>
</dbReference>
<dbReference type="HAMAP" id="MF_00041">
    <property type="entry name" value="Cys_tRNA_synth"/>
    <property type="match status" value="1"/>
</dbReference>
<dbReference type="InterPro" id="IPR015803">
    <property type="entry name" value="Cys-tRNA-ligase"/>
</dbReference>
<dbReference type="InterPro" id="IPR015273">
    <property type="entry name" value="Cys-tRNA-synt_Ia_DALR"/>
</dbReference>
<dbReference type="InterPro" id="IPR024909">
    <property type="entry name" value="Cys-tRNA/MSH_ligase"/>
</dbReference>
<dbReference type="InterPro" id="IPR056411">
    <property type="entry name" value="CysS_C"/>
</dbReference>
<dbReference type="InterPro" id="IPR014729">
    <property type="entry name" value="Rossmann-like_a/b/a_fold"/>
</dbReference>
<dbReference type="InterPro" id="IPR032678">
    <property type="entry name" value="tRNA-synt_1_cat_dom"/>
</dbReference>
<dbReference type="InterPro" id="IPR009080">
    <property type="entry name" value="tRNAsynth_Ia_anticodon-bd"/>
</dbReference>
<dbReference type="InterPro" id="IPR001943">
    <property type="entry name" value="UVR_dom"/>
</dbReference>
<dbReference type="NCBIfam" id="TIGR00435">
    <property type="entry name" value="cysS"/>
    <property type="match status" value="1"/>
</dbReference>
<dbReference type="PANTHER" id="PTHR10890:SF3">
    <property type="entry name" value="CYSTEINE--TRNA LIGASE, CYTOPLASMIC"/>
    <property type="match status" value="1"/>
</dbReference>
<dbReference type="PANTHER" id="PTHR10890">
    <property type="entry name" value="CYSTEINYL-TRNA SYNTHETASE"/>
    <property type="match status" value="1"/>
</dbReference>
<dbReference type="Pfam" id="PF23493">
    <property type="entry name" value="CysS_C"/>
    <property type="match status" value="1"/>
</dbReference>
<dbReference type="Pfam" id="PF09190">
    <property type="entry name" value="DALR_2"/>
    <property type="match status" value="1"/>
</dbReference>
<dbReference type="Pfam" id="PF01406">
    <property type="entry name" value="tRNA-synt_1e"/>
    <property type="match status" value="1"/>
</dbReference>
<dbReference type="PRINTS" id="PR00983">
    <property type="entry name" value="TRNASYNTHCYS"/>
</dbReference>
<dbReference type="SMART" id="SM00840">
    <property type="entry name" value="DALR_2"/>
    <property type="match status" value="1"/>
</dbReference>
<dbReference type="SUPFAM" id="SSF47323">
    <property type="entry name" value="Anticodon-binding domain of a subclass of class I aminoacyl-tRNA synthetases"/>
    <property type="match status" value="1"/>
</dbReference>
<dbReference type="SUPFAM" id="SSF52374">
    <property type="entry name" value="Nucleotidylyl transferase"/>
    <property type="match status" value="1"/>
</dbReference>
<gene>
    <name evidence="1" type="primary">cysS</name>
    <name type="ordered locus">spr0519</name>
</gene>
<proteinExistence type="inferred from homology"/>
<evidence type="ECO:0000255" key="1">
    <source>
        <dbReference type="HAMAP-Rule" id="MF_00041"/>
    </source>
</evidence>
<keyword id="KW-0030">Aminoacyl-tRNA synthetase</keyword>
<keyword id="KW-0067">ATP-binding</keyword>
<keyword id="KW-0963">Cytoplasm</keyword>
<keyword id="KW-0436">Ligase</keyword>
<keyword id="KW-0479">Metal-binding</keyword>
<keyword id="KW-0547">Nucleotide-binding</keyword>
<keyword id="KW-0648">Protein biosynthesis</keyword>
<keyword id="KW-1185">Reference proteome</keyword>
<keyword id="KW-0862">Zinc</keyword>
<sequence>MIKIYDTMSRDLREFVPIEDGKIKMYVCGPTVYNYIHVGNARSTVAFDTIRRYFEYRGYKVAYISNFTDVDDKIINRAREEGITPQEVADKYIAAFREDVTALGVKPATRHPRVVEFMADIIRFVEDLIERGFAYESQGDVYFRVEKSHNYAKLANKTLEDLELGASGRTDEETARKENPVDFALWKSSKPGEISWDSPWGPGRPGWHIECSVMSTEILGDTIDIHGGGADLEFPHHTNEIAQSEAKTGKAFANYWMHNGFVNIDNVKMSKSLGNFITVHDALKTLDGQVLRFFFATQHYRKPINFTEKAVRDAETNLKYLKNTYEQPFTGNVDAQELQNFKDKFVAAMDEDFNAANGITVVFEMAKWINSGNYDASVKQALADMLEIFGIVFVEEVLDAEIEDLIQKRQEARANRDFETADQIRDQLVTQGIKLLDTKDGVRWTRD</sequence>
<comment type="catalytic activity">
    <reaction evidence="1">
        <text>tRNA(Cys) + L-cysteine + ATP = L-cysteinyl-tRNA(Cys) + AMP + diphosphate</text>
        <dbReference type="Rhea" id="RHEA:17773"/>
        <dbReference type="Rhea" id="RHEA-COMP:9661"/>
        <dbReference type="Rhea" id="RHEA-COMP:9679"/>
        <dbReference type="ChEBI" id="CHEBI:30616"/>
        <dbReference type="ChEBI" id="CHEBI:33019"/>
        <dbReference type="ChEBI" id="CHEBI:35235"/>
        <dbReference type="ChEBI" id="CHEBI:78442"/>
        <dbReference type="ChEBI" id="CHEBI:78517"/>
        <dbReference type="ChEBI" id="CHEBI:456215"/>
        <dbReference type="EC" id="6.1.1.16"/>
    </reaction>
</comment>
<comment type="cofactor">
    <cofactor evidence="1">
        <name>Zn(2+)</name>
        <dbReference type="ChEBI" id="CHEBI:29105"/>
    </cofactor>
    <text evidence="1">Binds 1 zinc ion per subunit.</text>
</comment>
<comment type="subunit">
    <text evidence="1">Monomer.</text>
</comment>
<comment type="subcellular location">
    <subcellularLocation>
        <location evidence="1">Cytoplasm</location>
    </subcellularLocation>
</comment>
<comment type="similarity">
    <text evidence="1">Belongs to the class-I aminoacyl-tRNA synthetase family.</text>
</comment>
<name>SYC_STRR6</name>
<accession>Q8DQS8</accession>
<organism>
    <name type="scientific">Streptococcus pneumoniae (strain ATCC BAA-255 / R6)</name>
    <dbReference type="NCBI Taxonomy" id="171101"/>
    <lineage>
        <taxon>Bacteria</taxon>
        <taxon>Bacillati</taxon>
        <taxon>Bacillota</taxon>
        <taxon>Bacilli</taxon>
        <taxon>Lactobacillales</taxon>
        <taxon>Streptococcaceae</taxon>
        <taxon>Streptococcus</taxon>
    </lineage>
</organism>